<dbReference type="EC" id="3.1.21.10" evidence="1"/>
<dbReference type="EMBL" id="CP000323">
    <property type="protein sequence ID" value="ABE74454.1"/>
    <property type="molecule type" value="Genomic_DNA"/>
</dbReference>
<dbReference type="RefSeq" id="WP_011513021.1">
    <property type="nucleotide sequence ID" value="NC_007969.1"/>
</dbReference>
<dbReference type="SMR" id="Q1QCZ9"/>
<dbReference type="STRING" id="335284.Pcryo_0671"/>
<dbReference type="KEGG" id="pcr:Pcryo_0671"/>
<dbReference type="eggNOG" id="COG0817">
    <property type="taxonomic scope" value="Bacteria"/>
</dbReference>
<dbReference type="HOGENOM" id="CLU_091257_2_1_6"/>
<dbReference type="Proteomes" id="UP000002425">
    <property type="component" value="Chromosome"/>
</dbReference>
<dbReference type="GO" id="GO:0005737">
    <property type="term" value="C:cytoplasm"/>
    <property type="evidence" value="ECO:0007669"/>
    <property type="project" value="UniProtKB-SubCell"/>
</dbReference>
<dbReference type="GO" id="GO:0048476">
    <property type="term" value="C:Holliday junction resolvase complex"/>
    <property type="evidence" value="ECO:0007669"/>
    <property type="project" value="UniProtKB-UniRule"/>
</dbReference>
<dbReference type="GO" id="GO:0008821">
    <property type="term" value="F:crossover junction DNA endonuclease activity"/>
    <property type="evidence" value="ECO:0007669"/>
    <property type="project" value="UniProtKB-UniRule"/>
</dbReference>
<dbReference type="GO" id="GO:0003677">
    <property type="term" value="F:DNA binding"/>
    <property type="evidence" value="ECO:0007669"/>
    <property type="project" value="UniProtKB-KW"/>
</dbReference>
<dbReference type="GO" id="GO:0000287">
    <property type="term" value="F:magnesium ion binding"/>
    <property type="evidence" value="ECO:0007669"/>
    <property type="project" value="UniProtKB-UniRule"/>
</dbReference>
<dbReference type="GO" id="GO:0006310">
    <property type="term" value="P:DNA recombination"/>
    <property type="evidence" value="ECO:0007669"/>
    <property type="project" value="UniProtKB-UniRule"/>
</dbReference>
<dbReference type="GO" id="GO:0006281">
    <property type="term" value="P:DNA repair"/>
    <property type="evidence" value="ECO:0007669"/>
    <property type="project" value="UniProtKB-UniRule"/>
</dbReference>
<dbReference type="CDD" id="cd16962">
    <property type="entry name" value="RuvC"/>
    <property type="match status" value="1"/>
</dbReference>
<dbReference type="FunFam" id="3.30.420.10:FF:000002">
    <property type="entry name" value="Crossover junction endodeoxyribonuclease RuvC"/>
    <property type="match status" value="1"/>
</dbReference>
<dbReference type="Gene3D" id="3.30.420.10">
    <property type="entry name" value="Ribonuclease H-like superfamily/Ribonuclease H"/>
    <property type="match status" value="1"/>
</dbReference>
<dbReference type="HAMAP" id="MF_00034">
    <property type="entry name" value="RuvC"/>
    <property type="match status" value="1"/>
</dbReference>
<dbReference type="InterPro" id="IPR012337">
    <property type="entry name" value="RNaseH-like_sf"/>
</dbReference>
<dbReference type="InterPro" id="IPR036397">
    <property type="entry name" value="RNaseH_sf"/>
</dbReference>
<dbReference type="InterPro" id="IPR020563">
    <property type="entry name" value="X-over_junc_endoDNase_Mg_BS"/>
</dbReference>
<dbReference type="InterPro" id="IPR002176">
    <property type="entry name" value="X-over_junc_endoDNase_RuvC"/>
</dbReference>
<dbReference type="NCBIfam" id="TIGR00228">
    <property type="entry name" value="ruvC"/>
    <property type="match status" value="1"/>
</dbReference>
<dbReference type="PANTHER" id="PTHR30194">
    <property type="entry name" value="CROSSOVER JUNCTION ENDODEOXYRIBONUCLEASE RUVC"/>
    <property type="match status" value="1"/>
</dbReference>
<dbReference type="PANTHER" id="PTHR30194:SF3">
    <property type="entry name" value="CROSSOVER JUNCTION ENDODEOXYRIBONUCLEASE RUVC"/>
    <property type="match status" value="1"/>
</dbReference>
<dbReference type="Pfam" id="PF02075">
    <property type="entry name" value="RuvC"/>
    <property type="match status" value="1"/>
</dbReference>
<dbReference type="PRINTS" id="PR00696">
    <property type="entry name" value="RSOLVASERUVC"/>
</dbReference>
<dbReference type="SUPFAM" id="SSF53098">
    <property type="entry name" value="Ribonuclease H-like"/>
    <property type="match status" value="1"/>
</dbReference>
<dbReference type="PROSITE" id="PS01321">
    <property type="entry name" value="RUVC"/>
    <property type="match status" value="1"/>
</dbReference>
<keyword id="KW-0963">Cytoplasm</keyword>
<keyword id="KW-0227">DNA damage</keyword>
<keyword id="KW-0233">DNA recombination</keyword>
<keyword id="KW-0234">DNA repair</keyword>
<keyword id="KW-0238">DNA-binding</keyword>
<keyword id="KW-0255">Endonuclease</keyword>
<keyword id="KW-0378">Hydrolase</keyword>
<keyword id="KW-0460">Magnesium</keyword>
<keyword id="KW-0479">Metal-binding</keyword>
<keyword id="KW-0540">Nuclease</keyword>
<proteinExistence type="inferred from homology"/>
<protein>
    <recommendedName>
        <fullName evidence="1">Crossover junction endodeoxyribonuclease RuvC</fullName>
        <ecNumber evidence="1">3.1.21.10</ecNumber>
    </recommendedName>
    <alternativeName>
        <fullName evidence="1">Holliday junction nuclease RuvC</fullName>
    </alternativeName>
    <alternativeName>
        <fullName evidence="1">Holliday junction resolvase RuvC</fullName>
    </alternativeName>
</protein>
<accession>Q1QCZ9</accession>
<evidence type="ECO:0000255" key="1">
    <source>
        <dbReference type="HAMAP-Rule" id="MF_00034"/>
    </source>
</evidence>
<reference key="1">
    <citation type="submission" date="2006-03" db="EMBL/GenBank/DDBJ databases">
        <title>Complete sequence of chromosome of Psychrobacter cryohalolentis K5.</title>
        <authorList>
            <consortium name="US DOE Joint Genome Institute"/>
            <person name="Copeland A."/>
            <person name="Lucas S."/>
            <person name="Lapidus A."/>
            <person name="Barry K."/>
            <person name="Detter J.C."/>
            <person name="Glavina T."/>
            <person name="Hammon N."/>
            <person name="Israni S."/>
            <person name="Dalin E."/>
            <person name="Tice H."/>
            <person name="Pitluck S."/>
            <person name="Brettin T."/>
            <person name="Bruce D."/>
            <person name="Han C."/>
            <person name="Tapia R."/>
            <person name="Sims D.R."/>
            <person name="Gilna P."/>
            <person name="Schmutz J."/>
            <person name="Larimer F."/>
            <person name="Land M."/>
            <person name="Hauser L."/>
            <person name="Kyrpides N."/>
            <person name="Kim E."/>
            <person name="Richardson P."/>
        </authorList>
    </citation>
    <scope>NUCLEOTIDE SEQUENCE [LARGE SCALE GENOMIC DNA]</scope>
    <source>
        <strain>ATCC BAA-1226 / DSM 17306 / VKM B-2378 / K5</strain>
    </source>
</reference>
<feature type="chain" id="PRO_1000002805" description="Crossover junction endodeoxyribonuclease RuvC">
    <location>
        <begin position="1"/>
        <end position="194"/>
    </location>
</feature>
<feature type="active site" evidence="1">
    <location>
        <position position="8"/>
    </location>
</feature>
<feature type="active site" evidence="1">
    <location>
        <position position="72"/>
    </location>
</feature>
<feature type="active site" evidence="1">
    <location>
        <position position="144"/>
    </location>
</feature>
<feature type="binding site" evidence="1">
    <location>
        <position position="8"/>
    </location>
    <ligand>
        <name>Mg(2+)</name>
        <dbReference type="ChEBI" id="CHEBI:18420"/>
        <label>1</label>
    </ligand>
</feature>
<feature type="binding site" evidence="1">
    <location>
        <position position="72"/>
    </location>
    <ligand>
        <name>Mg(2+)</name>
        <dbReference type="ChEBI" id="CHEBI:18420"/>
        <label>2</label>
    </ligand>
</feature>
<feature type="binding site" evidence="1">
    <location>
        <position position="144"/>
    </location>
    <ligand>
        <name>Mg(2+)</name>
        <dbReference type="ChEBI" id="CHEBI:18420"/>
        <label>1</label>
    </ligand>
</feature>
<sequence length="194" mass="21338">MAIIIGIDPGSRMTGYGILQQTGDKLTYIDSGTIRTDTKEMPERLKRIFNGLTRITQHHLKYADEPIYTAIEQVFMAENPDSALKLGQARGAAIAAMVALDLEVSEYTARQIKQAVCGYGAAAKEQVQEMVCRILTLDFVPQQDAADGLACAICHAHSSHSMNKLILNSAMRGRGASKKKGRWRLTEEDLGNLR</sequence>
<gene>
    <name evidence="1" type="primary">ruvC</name>
    <name type="ordered locus">Pcryo_0671</name>
</gene>
<organism>
    <name type="scientific">Psychrobacter cryohalolentis (strain ATCC BAA-1226 / DSM 17306 / VKM B-2378 / K5)</name>
    <dbReference type="NCBI Taxonomy" id="335284"/>
    <lineage>
        <taxon>Bacteria</taxon>
        <taxon>Pseudomonadati</taxon>
        <taxon>Pseudomonadota</taxon>
        <taxon>Gammaproteobacteria</taxon>
        <taxon>Moraxellales</taxon>
        <taxon>Moraxellaceae</taxon>
        <taxon>Psychrobacter</taxon>
    </lineage>
</organism>
<comment type="function">
    <text evidence="1">The RuvA-RuvB-RuvC complex processes Holliday junction (HJ) DNA during genetic recombination and DNA repair. Endonuclease that resolves HJ intermediates. Cleaves cruciform DNA by making single-stranded nicks across the HJ at symmetrical positions within the homologous arms, yielding a 5'-phosphate and a 3'-hydroxyl group; requires a central core of homology in the junction. The consensus cleavage sequence is 5'-(A/T)TT(C/G)-3'. Cleavage occurs on the 3'-side of the TT dinucleotide at the point of strand exchange. HJ branch migration catalyzed by RuvA-RuvB allows RuvC to scan DNA until it finds its consensus sequence, where it cleaves and resolves the cruciform DNA.</text>
</comment>
<comment type="catalytic activity">
    <reaction evidence="1">
        <text>Endonucleolytic cleavage at a junction such as a reciprocal single-stranded crossover between two homologous DNA duplexes (Holliday junction).</text>
        <dbReference type="EC" id="3.1.21.10"/>
    </reaction>
</comment>
<comment type="cofactor">
    <cofactor evidence="1">
        <name>Mg(2+)</name>
        <dbReference type="ChEBI" id="CHEBI:18420"/>
    </cofactor>
    <text evidence="1">Binds 2 Mg(2+) ion per subunit.</text>
</comment>
<comment type="subunit">
    <text evidence="1">Homodimer which binds Holliday junction (HJ) DNA. The HJ becomes 2-fold symmetrical on binding to RuvC with unstacked arms; it has a different conformation from HJ DNA in complex with RuvA. In the full resolvosome a probable DNA-RuvA(4)-RuvB(12)-RuvC(2) complex forms which resolves the HJ.</text>
</comment>
<comment type="subcellular location">
    <subcellularLocation>
        <location evidence="1">Cytoplasm</location>
    </subcellularLocation>
</comment>
<comment type="similarity">
    <text evidence="1">Belongs to the RuvC family.</text>
</comment>
<name>RUVC_PSYCK</name>